<reference key="1">
    <citation type="journal article" date="2007" name="Proc. Natl. Acad. Sci. U.S.A.">
        <title>Deep-sea vent epsilon-proteobacterial genomes provide insights into emergence of pathogens.</title>
        <authorList>
            <person name="Nakagawa S."/>
            <person name="Takaki Y."/>
            <person name="Shimamura S."/>
            <person name="Reysenbach A.-L."/>
            <person name="Takai K."/>
            <person name="Horikoshi K."/>
        </authorList>
    </citation>
    <scope>NUCLEOTIDE SEQUENCE [LARGE SCALE GENOMIC DNA]</scope>
    <source>
        <strain>SB155-2</strain>
    </source>
</reference>
<evidence type="ECO:0000255" key="1">
    <source>
        <dbReference type="HAMAP-Rule" id="MF_00076"/>
    </source>
</evidence>
<protein>
    <recommendedName>
        <fullName evidence="1">Imidazoleglycerol-phosphate dehydratase</fullName>
        <shortName evidence="1">IGPD</shortName>
        <ecNumber evidence="1">4.2.1.19</ecNumber>
    </recommendedName>
</protein>
<sequence>MIKIERQTKETDIVVELNVDGKGKSDIDTGIGFFDHMLESFAKHARFDVKVVCKGDIHVDFHHSVEDVGIVLGQAFYQSVFPVHNKERFGDAVIVMDESAVECAIDLSNRPFLVYEVDIDGTIGQFDAELIEEFFRAFVFNARITAHIIQKRGKNRHHLAEASFKALAVALRRALAEDKRAGMPSTKGVL</sequence>
<accession>A6Q330</accession>
<organism>
    <name type="scientific">Nitratiruptor sp. (strain SB155-2)</name>
    <dbReference type="NCBI Taxonomy" id="387092"/>
    <lineage>
        <taxon>Bacteria</taxon>
        <taxon>Pseudomonadati</taxon>
        <taxon>Campylobacterota</taxon>
        <taxon>Epsilonproteobacteria</taxon>
        <taxon>Nautiliales</taxon>
        <taxon>Nitratiruptoraceae</taxon>
        <taxon>Nitratiruptor</taxon>
    </lineage>
</organism>
<dbReference type="EC" id="4.2.1.19" evidence="1"/>
<dbReference type="EMBL" id="AP009178">
    <property type="protein sequence ID" value="BAF69889.1"/>
    <property type="molecule type" value="Genomic_DNA"/>
</dbReference>
<dbReference type="RefSeq" id="WP_012082152.1">
    <property type="nucleotide sequence ID" value="NC_009662.1"/>
</dbReference>
<dbReference type="SMR" id="A6Q330"/>
<dbReference type="FunCoup" id="A6Q330">
    <property type="interactions" value="340"/>
</dbReference>
<dbReference type="STRING" id="387092.NIS_0777"/>
<dbReference type="KEGG" id="nis:NIS_0777"/>
<dbReference type="eggNOG" id="COG0131">
    <property type="taxonomic scope" value="Bacteria"/>
</dbReference>
<dbReference type="HOGENOM" id="CLU_044308_3_0_7"/>
<dbReference type="InParanoid" id="A6Q330"/>
<dbReference type="OrthoDB" id="9790411at2"/>
<dbReference type="UniPathway" id="UPA00031">
    <property type="reaction ID" value="UER00011"/>
</dbReference>
<dbReference type="Proteomes" id="UP000001118">
    <property type="component" value="Chromosome"/>
</dbReference>
<dbReference type="GO" id="GO:0005737">
    <property type="term" value="C:cytoplasm"/>
    <property type="evidence" value="ECO:0007669"/>
    <property type="project" value="UniProtKB-SubCell"/>
</dbReference>
<dbReference type="GO" id="GO:0004424">
    <property type="term" value="F:imidazoleglycerol-phosphate dehydratase activity"/>
    <property type="evidence" value="ECO:0007669"/>
    <property type="project" value="UniProtKB-UniRule"/>
</dbReference>
<dbReference type="GO" id="GO:0000105">
    <property type="term" value="P:L-histidine biosynthetic process"/>
    <property type="evidence" value="ECO:0007669"/>
    <property type="project" value="UniProtKB-UniRule"/>
</dbReference>
<dbReference type="CDD" id="cd07914">
    <property type="entry name" value="IGPD"/>
    <property type="match status" value="1"/>
</dbReference>
<dbReference type="FunFam" id="3.30.230.40:FF:000001">
    <property type="entry name" value="Imidazoleglycerol-phosphate dehydratase HisB"/>
    <property type="match status" value="1"/>
</dbReference>
<dbReference type="FunFam" id="3.30.230.40:FF:000003">
    <property type="entry name" value="Imidazoleglycerol-phosphate dehydratase HisB"/>
    <property type="match status" value="1"/>
</dbReference>
<dbReference type="Gene3D" id="3.30.230.40">
    <property type="entry name" value="Imidazole glycerol phosphate dehydratase, domain 1"/>
    <property type="match status" value="2"/>
</dbReference>
<dbReference type="HAMAP" id="MF_00076">
    <property type="entry name" value="HisB"/>
    <property type="match status" value="1"/>
</dbReference>
<dbReference type="InterPro" id="IPR038494">
    <property type="entry name" value="IGPD_sf"/>
</dbReference>
<dbReference type="InterPro" id="IPR000807">
    <property type="entry name" value="ImidazoleglycerolP_deHydtase"/>
</dbReference>
<dbReference type="InterPro" id="IPR020565">
    <property type="entry name" value="ImidazoleglycerP_deHydtase_CS"/>
</dbReference>
<dbReference type="InterPro" id="IPR020568">
    <property type="entry name" value="Ribosomal_Su5_D2-typ_SF"/>
</dbReference>
<dbReference type="NCBIfam" id="NF002111">
    <property type="entry name" value="PRK00951.2-1"/>
    <property type="match status" value="1"/>
</dbReference>
<dbReference type="NCBIfam" id="NF002114">
    <property type="entry name" value="PRK00951.2-4"/>
    <property type="match status" value="1"/>
</dbReference>
<dbReference type="PANTHER" id="PTHR23133:SF2">
    <property type="entry name" value="IMIDAZOLEGLYCEROL-PHOSPHATE DEHYDRATASE"/>
    <property type="match status" value="1"/>
</dbReference>
<dbReference type="PANTHER" id="PTHR23133">
    <property type="entry name" value="IMIDAZOLEGLYCEROL-PHOSPHATE DEHYDRATASE HIS7"/>
    <property type="match status" value="1"/>
</dbReference>
<dbReference type="Pfam" id="PF00475">
    <property type="entry name" value="IGPD"/>
    <property type="match status" value="1"/>
</dbReference>
<dbReference type="SUPFAM" id="SSF54211">
    <property type="entry name" value="Ribosomal protein S5 domain 2-like"/>
    <property type="match status" value="2"/>
</dbReference>
<dbReference type="PROSITE" id="PS00954">
    <property type="entry name" value="IGP_DEHYDRATASE_1"/>
    <property type="match status" value="1"/>
</dbReference>
<dbReference type="PROSITE" id="PS00955">
    <property type="entry name" value="IGP_DEHYDRATASE_2"/>
    <property type="match status" value="1"/>
</dbReference>
<proteinExistence type="inferred from homology"/>
<gene>
    <name evidence="1" type="primary">hisB</name>
    <name type="ordered locus">NIS_0777</name>
</gene>
<name>HIS7_NITSB</name>
<comment type="catalytic activity">
    <reaction evidence="1">
        <text>D-erythro-1-(imidazol-4-yl)glycerol 3-phosphate = 3-(imidazol-4-yl)-2-oxopropyl phosphate + H2O</text>
        <dbReference type="Rhea" id="RHEA:11040"/>
        <dbReference type="ChEBI" id="CHEBI:15377"/>
        <dbReference type="ChEBI" id="CHEBI:57766"/>
        <dbReference type="ChEBI" id="CHEBI:58278"/>
        <dbReference type="EC" id="4.2.1.19"/>
    </reaction>
</comment>
<comment type="pathway">
    <text evidence="1">Amino-acid biosynthesis; L-histidine biosynthesis; L-histidine from 5-phospho-alpha-D-ribose 1-diphosphate: step 6/9.</text>
</comment>
<comment type="subcellular location">
    <subcellularLocation>
        <location evidence="1">Cytoplasm</location>
    </subcellularLocation>
</comment>
<comment type="similarity">
    <text evidence="1">Belongs to the imidazoleglycerol-phosphate dehydratase family.</text>
</comment>
<feature type="chain" id="PRO_1000010313" description="Imidazoleglycerol-phosphate dehydratase">
    <location>
        <begin position="1"/>
        <end position="190"/>
    </location>
</feature>
<keyword id="KW-0028">Amino-acid biosynthesis</keyword>
<keyword id="KW-0963">Cytoplasm</keyword>
<keyword id="KW-0368">Histidine biosynthesis</keyword>
<keyword id="KW-0456">Lyase</keyword>
<keyword id="KW-1185">Reference proteome</keyword>